<evidence type="ECO:0000250" key="1"/>
<evidence type="ECO:0000255" key="2"/>
<evidence type="ECO:0000255" key="3">
    <source>
        <dbReference type="PROSITE-ProRule" id="PRU00031"/>
    </source>
</evidence>
<evidence type="ECO:0000269" key="4">
    <source>
    </source>
</evidence>
<evidence type="ECO:0000305" key="5"/>
<protein>
    <recommendedName>
        <fullName>Uterine plasmin/trypsin inhibitor</fullName>
        <shortName>UPTI</shortName>
    </recommendedName>
</protein>
<organism>
    <name type="scientific">Sus scrofa</name>
    <name type="common">Pig</name>
    <dbReference type="NCBI Taxonomy" id="9823"/>
    <lineage>
        <taxon>Eukaryota</taxon>
        <taxon>Metazoa</taxon>
        <taxon>Chordata</taxon>
        <taxon>Craniata</taxon>
        <taxon>Vertebrata</taxon>
        <taxon>Euteleostomi</taxon>
        <taxon>Mammalia</taxon>
        <taxon>Eutheria</taxon>
        <taxon>Laurasiatheria</taxon>
        <taxon>Artiodactyla</taxon>
        <taxon>Suina</taxon>
        <taxon>Suidae</taxon>
        <taxon>Sus</taxon>
    </lineage>
</organism>
<sequence>MSRLCLSAALLLLLGALVASTPGDEESSLVRAGPPGFCREPPYTGPCSAHFVRYFYNATTGLCQSFVYGGCRGKQNNFMDEKECLHTCDTCAKAQGKRGNCASEMLKSTRPQGWAVAAFQMG</sequence>
<proteinExistence type="evidence at protein level"/>
<accession>Q29100</accession>
<comment type="function">
    <text>Inhibitor of plasmin and trypsin. Also has a weak affinity for chymotrypsin. Could serve to neutralize the activities of one or more serine proteinases generated by the proliferating trophoblast during the formation of the noninvasive placenta.</text>
</comment>
<comment type="tissue specificity">
    <text>Expressed only in the uterus and the endometrium.</text>
</comment>
<comment type="developmental stage">
    <text>Maximally expressed during pregnancy until day 30 after which levels decrease significantly.</text>
</comment>
<comment type="induction">
    <text>By progesterone.</text>
</comment>
<keyword id="KW-0903">Direct protein sequencing</keyword>
<keyword id="KW-1015">Disulfide bond</keyword>
<keyword id="KW-0646">Protease inhibitor</keyword>
<keyword id="KW-1185">Reference proteome</keyword>
<keyword id="KW-0722">Serine protease inhibitor</keyword>
<keyword id="KW-0732">Signal</keyword>
<name>UPTI_PIG</name>
<feature type="signal peptide" evidence="2">
    <location>
        <begin position="1"/>
        <end position="20"/>
    </location>
</feature>
<feature type="propeptide" id="PRO_0000016881" evidence="4">
    <location>
        <begin position="21"/>
        <end position="29"/>
    </location>
</feature>
<feature type="chain" id="PRO_0000016882" description="Uterine plasmin/trypsin inhibitor">
    <location>
        <begin position="30"/>
        <end position="122"/>
    </location>
</feature>
<feature type="domain" description="BPTI/Kunitz inhibitor" evidence="3">
    <location>
        <begin position="38"/>
        <end position="88"/>
    </location>
</feature>
<feature type="site" description="Reactive bond" evidence="1">
    <location>
        <begin position="48"/>
        <end position="49"/>
    </location>
</feature>
<feature type="disulfide bond" evidence="3">
    <location>
        <begin position="38"/>
        <end position="88"/>
    </location>
</feature>
<feature type="disulfide bond" evidence="3">
    <location>
        <begin position="47"/>
        <end position="71"/>
    </location>
</feature>
<feature type="disulfide bond" evidence="3">
    <location>
        <begin position="63"/>
        <end position="84"/>
    </location>
</feature>
<feature type="sequence conflict" description="In Ref. 1; AA sequence." evidence="5" ref="1">
    <original>G</original>
    <variation>A</variation>
    <location>
        <position position="36"/>
    </location>
</feature>
<feature type="sequence conflict" description="In Ref. 1; AA sequence." evidence="5" ref="1">
    <original>S</original>
    <variation>R</variation>
    <location>
        <position position="48"/>
    </location>
</feature>
<feature type="sequence conflict" description="In Ref. 1; AA sequence." evidence="5" ref="1">
    <original>V</original>
    <variation>I</variation>
    <location>
        <position position="52"/>
    </location>
</feature>
<feature type="sequence conflict" description="In Ref. 1; AA sequence." evidence="5" ref="1">
    <original>Y</original>
    <variation>V</variation>
    <location>
        <position position="54"/>
    </location>
</feature>
<dbReference type="EMBL" id="L14282">
    <property type="protein sequence ID" value="AAA62425.1"/>
    <property type="molecule type" value="mRNA"/>
</dbReference>
<dbReference type="PIR" id="A55115">
    <property type="entry name" value="A55115"/>
</dbReference>
<dbReference type="RefSeq" id="NP_999036.1">
    <property type="nucleotide sequence ID" value="NM_213871.1"/>
</dbReference>
<dbReference type="SMR" id="Q29100"/>
<dbReference type="FunCoup" id="Q29100">
    <property type="interactions" value="2"/>
</dbReference>
<dbReference type="STRING" id="9823.ENSSSCP00000026254"/>
<dbReference type="GeneID" id="396887"/>
<dbReference type="CTD" id="396887"/>
<dbReference type="InParanoid" id="Q29100"/>
<dbReference type="OrthoDB" id="4473401at2759"/>
<dbReference type="Proteomes" id="UP000008227">
    <property type="component" value="Unplaced"/>
</dbReference>
<dbReference type="Proteomes" id="UP000314985">
    <property type="component" value="Unplaced"/>
</dbReference>
<dbReference type="Proteomes" id="UP000694570">
    <property type="component" value="Unplaced"/>
</dbReference>
<dbReference type="Proteomes" id="UP000694571">
    <property type="component" value="Unplaced"/>
</dbReference>
<dbReference type="Proteomes" id="UP000694720">
    <property type="component" value="Unplaced"/>
</dbReference>
<dbReference type="Proteomes" id="UP000694722">
    <property type="component" value="Unplaced"/>
</dbReference>
<dbReference type="Proteomes" id="UP000694723">
    <property type="component" value="Unplaced"/>
</dbReference>
<dbReference type="Proteomes" id="UP000694724">
    <property type="component" value="Unplaced"/>
</dbReference>
<dbReference type="Proteomes" id="UP000694725">
    <property type="component" value="Unplaced"/>
</dbReference>
<dbReference type="Proteomes" id="UP000694726">
    <property type="component" value="Unplaced"/>
</dbReference>
<dbReference type="Proteomes" id="UP000694727">
    <property type="component" value="Unplaced"/>
</dbReference>
<dbReference type="Proteomes" id="UP000694728">
    <property type="component" value="Unplaced"/>
</dbReference>
<dbReference type="GO" id="GO:0005615">
    <property type="term" value="C:extracellular space"/>
    <property type="evidence" value="ECO:0000318"/>
    <property type="project" value="GO_Central"/>
</dbReference>
<dbReference type="GO" id="GO:0004867">
    <property type="term" value="F:serine-type endopeptidase inhibitor activity"/>
    <property type="evidence" value="ECO:0000318"/>
    <property type="project" value="GO_Central"/>
</dbReference>
<dbReference type="CDD" id="cd22592">
    <property type="entry name" value="Kunitz_BPTI"/>
    <property type="match status" value="1"/>
</dbReference>
<dbReference type="FunFam" id="4.10.410.10:FF:000005">
    <property type="entry name" value="Pancreatic trypsin inhibitor"/>
    <property type="match status" value="1"/>
</dbReference>
<dbReference type="Gene3D" id="4.10.410.10">
    <property type="entry name" value="Pancreatic trypsin inhibitor Kunitz domain"/>
    <property type="match status" value="1"/>
</dbReference>
<dbReference type="InterPro" id="IPR002223">
    <property type="entry name" value="Kunitz_BPTI"/>
</dbReference>
<dbReference type="InterPro" id="IPR036880">
    <property type="entry name" value="Kunitz_BPTI_sf"/>
</dbReference>
<dbReference type="InterPro" id="IPR020901">
    <property type="entry name" value="Prtase_inh_Kunz-CS"/>
</dbReference>
<dbReference type="InterPro" id="IPR050098">
    <property type="entry name" value="TFPI/VKTCI-like"/>
</dbReference>
<dbReference type="PANTHER" id="PTHR10083">
    <property type="entry name" value="KUNITZ-TYPE PROTEASE INHIBITOR-RELATED"/>
    <property type="match status" value="1"/>
</dbReference>
<dbReference type="PANTHER" id="PTHR10083:SF369">
    <property type="entry name" value="UTERINE PLASMIN_TRYPSIN INHIBITOR"/>
    <property type="match status" value="1"/>
</dbReference>
<dbReference type="Pfam" id="PF00014">
    <property type="entry name" value="Kunitz_BPTI"/>
    <property type="match status" value="1"/>
</dbReference>
<dbReference type="PRINTS" id="PR00759">
    <property type="entry name" value="BASICPTASE"/>
</dbReference>
<dbReference type="SMART" id="SM00131">
    <property type="entry name" value="KU"/>
    <property type="match status" value="1"/>
</dbReference>
<dbReference type="SUPFAM" id="SSF57362">
    <property type="entry name" value="BPTI-like"/>
    <property type="match status" value="1"/>
</dbReference>
<dbReference type="PROSITE" id="PS00280">
    <property type="entry name" value="BPTI_KUNITZ_1"/>
    <property type="match status" value="1"/>
</dbReference>
<dbReference type="PROSITE" id="PS50279">
    <property type="entry name" value="BPTI_KUNITZ_2"/>
    <property type="match status" value="1"/>
</dbReference>
<reference key="1">
    <citation type="journal article" date="1994" name="J. Biol. Chem.">
        <title>Purification, characterization, and cDNA cloning of a Kunitz-type proteinase inhibitor secreted by the porcine uterus.</title>
        <authorList>
            <person name="Stallings-Mann M.L."/>
            <person name="Burke M.G."/>
            <person name="Trout W.E."/>
            <person name="Roberts R.M."/>
        </authorList>
    </citation>
    <scope>NUCLEOTIDE SEQUENCE [MRNA]</scope>
    <scope>PROTEIN SEQUENCE OF 30-56</scope>
    <scope>CHARACTERIZATION</scope>
    <source>
        <tissue>Conceptus membrane</tissue>
        <tissue>Uterus</tissue>
    </source>
</reference>